<organism>
    <name type="scientific">Pyrobaculum calidifontis (strain DSM 21063 / JCM 11548 / VA1)</name>
    <dbReference type="NCBI Taxonomy" id="410359"/>
    <lineage>
        <taxon>Archaea</taxon>
        <taxon>Thermoproteota</taxon>
        <taxon>Thermoprotei</taxon>
        <taxon>Thermoproteales</taxon>
        <taxon>Thermoproteaceae</taxon>
        <taxon>Pyrobaculum</taxon>
    </lineage>
</organism>
<feature type="chain" id="PRO_1000025484" description="Glutamyl-tRNA(Gln) amidotransferase subunit E">
    <location>
        <begin position="1"/>
        <end position="608"/>
    </location>
</feature>
<feature type="region of interest" description="Disordered" evidence="2">
    <location>
        <begin position="402"/>
        <end position="422"/>
    </location>
</feature>
<keyword id="KW-0067">ATP-binding</keyword>
<keyword id="KW-0436">Ligase</keyword>
<keyword id="KW-0547">Nucleotide-binding</keyword>
<keyword id="KW-0648">Protein biosynthesis</keyword>
<evidence type="ECO:0000255" key="1">
    <source>
        <dbReference type="HAMAP-Rule" id="MF_00588"/>
    </source>
</evidence>
<evidence type="ECO:0000256" key="2">
    <source>
        <dbReference type="SAM" id="MobiDB-lite"/>
    </source>
</evidence>
<name>GATE_PYRCJ</name>
<comment type="function">
    <text evidence="1">Allows the formation of correctly charged Gln-tRNA(Gln) through the transamidation of misacylated Glu-tRNA(Gln) in organisms which lack glutaminyl-tRNA synthetase. The reaction takes place in the presence of glutamine and ATP through an activated gamma-phospho-Glu-tRNA(Gln). The GatDE system is specific for glutamate and does not act on aspartate.</text>
</comment>
<comment type="catalytic activity">
    <reaction evidence="1">
        <text>L-glutamyl-tRNA(Gln) + L-glutamine + ATP + H2O = L-glutaminyl-tRNA(Gln) + L-glutamate + ADP + phosphate + H(+)</text>
        <dbReference type="Rhea" id="RHEA:17521"/>
        <dbReference type="Rhea" id="RHEA-COMP:9681"/>
        <dbReference type="Rhea" id="RHEA-COMP:9684"/>
        <dbReference type="ChEBI" id="CHEBI:15377"/>
        <dbReference type="ChEBI" id="CHEBI:15378"/>
        <dbReference type="ChEBI" id="CHEBI:29985"/>
        <dbReference type="ChEBI" id="CHEBI:30616"/>
        <dbReference type="ChEBI" id="CHEBI:43474"/>
        <dbReference type="ChEBI" id="CHEBI:58359"/>
        <dbReference type="ChEBI" id="CHEBI:78520"/>
        <dbReference type="ChEBI" id="CHEBI:78521"/>
        <dbReference type="ChEBI" id="CHEBI:456216"/>
    </reaction>
</comment>
<comment type="subunit">
    <text evidence="1">Heterodimer of GatD and GatE.</text>
</comment>
<comment type="similarity">
    <text evidence="1">Belongs to the GatB/GatE family. GatE subfamily.</text>
</comment>
<accession>A3MV63</accession>
<protein>
    <recommendedName>
        <fullName evidence="1">Glutamyl-tRNA(Gln) amidotransferase subunit E</fullName>
        <shortName evidence="1">Glu-ADT subunit E</shortName>
        <ecNumber evidence="1">6.3.5.-</ecNumber>
    </recommendedName>
</protein>
<gene>
    <name evidence="1" type="primary">gatE</name>
    <name type="ordered locus">Pcal_1105</name>
</gene>
<reference key="1">
    <citation type="submission" date="2007-02" db="EMBL/GenBank/DDBJ databases">
        <title>Complete sequence of Pyrobaculum calidifontis JCM 11548.</title>
        <authorList>
            <consortium name="US DOE Joint Genome Institute"/>
            <person name="Copeland A."/>
            <person name="Lucas S."/>
            <person name="Lapidus A."/>
            <person name="Barry K."/>
            <person name="Glavina del Rio T."/>
            <person name="Dalin E."/>
            <person name="Tice H."/>
            <person name="Pitluck S."/>
            <person name="Chain P."/>
            <person name="Malfatti S."/>
            <person name="Shin M."/>
            <person name="Vergez L."/>
            <person name="Schmutz J."/>
            <person name="Larimer F."/>
            <person name="Land M."/>
            <person name="Hauser L."/>
            <person name="Kyrpides N."/>
            <person name="Mikhailova N."/>
            <person name="Cozen A.E."/>
            <person name="Fitz-Gibbon S.T."/>
            <person name="House C.H."/>
            <person name="Saltikov C."/>
            <person name="Lowe T.M."/>
            <person name="Richardson P."/>
        </authorList>
    </citation>
    <scope>NUCLEOTIDE SEQUENCE [LARGE SCALE GENOMIC DNA]</scope>
    <source>
        <strain>DSM 21063 / JCM 11548 / VA1</strain>
    </source>
</reference>
<proteinExistence type="inferred from homology"/>
<dbReference type="EC" id="6.3.5.-" evidence="1"/>
<dbReference type="EMBL" id="CP000561">
    <property type="protein sequence ID" value="ABO08530.1"/>
    <property type="molecule type" value="Genomic_DNA"/>
</dbReference>
<dbReference type="RefSeq" id="WP_011849788.1">
    <property type="nucleotide sequence ID" value="NC_009073.1"/>
</dbReference>
<dbReference type="SMR" id="A3MV63"/>
<dbReference type="STRING" id="410359.Pcal_1105"/>
<dbReference type="GeneID" id="4909371"/>
<dbReference type="KEGG" id="pcl:Pcal_1105"/>
<dbReference type="eggNOG" id="arCOG01719">
    <property type="taxonomic scope" value="Archaea"/>
</dbReference>
<dbReference type="HOGENOM" id="CLU_030702_0_0_2"/>
<dbReference type="OrthoDB" id="7316at2157"/>
<dbReference type="Proteomes" id="UP000001431">
    <property type="component" value="Chromosome"/>
</dbReference>
<dbReference type="GO" id="GO:0005737">
    <property type="term" value="C:cytoplasm"/>
    <property type="evidence" value="ECO:0007669"/>
    <property type="project" value="InterPro"/>
</dbReference>
<dbReference type="GO" id="GO:0004812">
    <property type="term" value="F:aminoacyl-tRNA ligase activity"/>
    <property type="evidence" value="ECO:0007669"/>
    <property type="project" value="InterPro"/>
</dbReference>
<dbReference type="GO" id="GO:0005524">
    <property type="term" value="F:ATP binding"/>
    <property type="evidence" value="ECO:0007669"/>
    <property type="project" value="UniProtKB-KW"/>
</dbReference>
<dbReference type="GO" id="GO:0050567">
    <property type="term" value="F:glutaminyl-tRNA synthase (glutamine-hydrolyzing) activity"/>
    <property type="evidence" value="ECO:0007669"/>
    <property type="project" value="UniProtKB-UniRule"/>
</dbReference>
<dbReference type="GO" id="GO:0070681">
    <property type="term" value="P:glutaminyl-tRNAGln biosynthesis via transamidation"/>
    <property type="evidence" value="ECO:0007669"/>
    <property type="project" value="TreeGrafter"/>
</dbReference>
<dbReference type="GO" id="GO:0006412">
    <property type="term" value="P:translation"/>
    <property type="evidence" value="ECO:0007669"/>
    <property type="project" value="UniProtKB-UniRule"/>
</dbReference>
<dbReference type="Gene3D" id="3.30.1360.30">
    <property type="entry name" value="GAD-like domain"/>
    <property type="match status" value="1"/>
</dbReference>
<dbReference type="Gene3D" id="1.10.150.380">
    <property type="entry name" value="GatB domain, N-terminal subdomain"/>
    <property type="match status" value="1"/>
</dbReference>
<dbReference type="HAMAP" id="MF_00588">
    <property type="entry name" value="GatE"/>
    <property type="match status" value="1"/>
</dbReference>
<dbReference type="InterPro" id="IPR017959">
    <property type="entry name" value="Asn/Gln-tRNA_amidoTrfase_suB/E"/>
</dbReference>
<dbReference type="InterPro" id="IPR006075">
    <property type="entry name" value="Asn/Gln-tRNA_Trfase_suB/E_cat"/>
</dbReference>
<dbReference type="InterPro" id="IPR018027">
    <property type="entry name" value="Asn/Gln_amidotransferase"/>
</dbReference>
<dbReference type="InterPro" id="IPR003789">
    <property type="entry name" value="Asn/Gln_tRNA_amidoTrase-B-like"/>
</dbReference>
<dbReference type="InterPro" id="IPR004115">
    <property type="entry name" value="GAD-like_sf"/>
</dbReference>
<dbReference type="InterPro" id="IPR029351">
    <property type="entry name" value="GAD_dom"/>
</dbReference>
<dbReference type="InterPro" id="IPR042114">
    <property type="entry name" value="GatB_C_1"/>
</dbReference>
<dbReference type="InterPro" id="IPR004414">
    <property type="entry name" value="GatE"/>
</dbReference>
<dbReference type="InterPro" id="IPR017958">
    <property type="entry name" value="Gln-tRNA_amidoTrfase_suB_CS"/>
</dbReference>
<dbReference type="InterPro" id="IPR014746">
    <property type="entry name" value="Gln_synth/guanido_kin_cat_dom"/>
</dbReference>
<dbReference type="NCBIfam" id="TIGR00134">
    <property type="entry name" value="gatE_arch"/>
    <property type="match status" value="1"/>
</dbReference>
<dbReference type="NCBIfam" id="NF003107">
    <property type="entry name" value="PRK04028.1"/>
    <property type="match status" value="1"/>
</dbReference>
<dbReference type="PANTHER" id="PTHR11659">
    <property type="entry name" value="GLUTAMYL-TRNA GLN AMIDOTRANSFERASE SUBUNIT B MITOCHONDRIAL AND PROKARYOTIC PET112-RELATED"/>
    <property type="match status" value="1"/>
</dbReference>
<dbReference type="PANTHER" id="PTHR11659:SF2">
    <property type="entry name" value="GLUTAMYL-TRNA(GLN) AMIDOTRANSFERASE SUBUNIT E"/>
    <property type="match status" value="1"/>
</dbReference>
<dbReference type="Pfam" id="PF02938">
    <property type="entry name" value="GAD"/>
    <property type="match status" value="1"/>
</dbReference>
<dbReference type="Pfam" id="PF02934">
    <property type="entry name" value="GatB_N"/>
    <property type="match status" value="1"/>
</dbReference>
<dbReference type="Pfam" id="PF02637">
    <property type="entry name" value="GatB_Yqey"/>
    <property type="match status" value="1"/>
</dbReference>
<dbReference type="SMART" id="SM00845">
    <property type="entry name" value="GatB_Yqey"/>
    <property type="match status" value="1"/>
</dbReference>
<dbReference type="SUPFAM" id="SSF55261">
    <property type="entry name" value="GAD domain-like"/>
    <property type="match status" value="1"/>
</dbReference>
<dbReference type="SUPFAM" id="SSF89095">
    <property type="entry name" value="GatB/YqeY motif"/>
    <property type="match status" value="1"/>
</dbReference>
<dbReference type="SUPFAM" id="SSF55931">
    <property type="entry name" value="Glutamine synthetase/guanido kinase"/>
    <property type="match status" value="1"/>
</dbReference>
<dbReference type="PROSITE" id="PS01234">
    <property type="entry name" value="GATB"/>
    <property type="match status" value="1"/>
</dbReference>
<sequence length="608" mass="67590">MDYRALGLKVGLEIHIQLNTRRKLFCHCPPVLRDDEPHFRLERRLHISLSELGAVDPAVVWEVRKRRRYVYEGYRDTTCLVELDEEPPHLPDEEALVTALGVAKMFNAKPFDELHVMRKIVVDGSNVSGFQRTVLVAYGGRAKILGYDIGVETIALEEDAARKMGEEGKAVIYRLDRLGIPLIEIATEPMSYSPQQVEEVAWIIGYSVKITGRAKRGVGTVRQDVNVSIAGGAKTEIKGVPDLSLIPKVIEYEAQRQVNLLKIAEELKKRGVASVELSTVDVTDVFSNTKSKLVKRVLEAGGRVVAVKAPGFRKLLGFEVQPGRRFGTELADYVRAWTELGGLLHSDELPGYGISADEVRAVEQRVGVDSYVLLMGVEAAELEEAARVVVDRLNAALRGVPEETRGANPDGTTRFLRPRPGAARMYPETDLPPIKVTFELLKRAEEVAKVSLEGKIAELTSMGLSKDLALRLVKSPHLEKFEEFVARFKSLPPQLIASIMLNTAKALAREGVEVSEEKLASVFEALENKVITKEAVEDVLRAMKPGESAAEVAKRLGLVRLPFEEVRKIVEEVAKEVGREKALGEVMRRYRGRVDAEDVRRALSELHF</sequence>